<comment type="function">
    <text evidence="1">ATP-dependent specificity component of the Clp protease. It directs the protease to specific substrates. Can perform chaperone functions in the absence of ClpP.</text>
</comment>
<comment type="subunit">
    <text evidence="1">Component of the ClpX-ClpP complex. Forms a hexameric ring that, in the presence of ATP, binds to fourteen ClpP subunits assembled into a disk-like structure with a central cavity, resembling the structure of eukaryotic proteasomes.</text>
</comment>
<comment type="similarity">
    <text evidence="1">Belongs to the ClpX chaperone family.</text>
</comment>
<protein>
    <recommendedName>
        <fullName evidence="1">ATP-dependent Clp protease ATP-binding subunit ClpX</fullName>
    </recommendedName>
</protein>
<proteinExistence type="inferred from homology"/>
<organism>
    <name type="scientific">Kocuria rhizophila (strain ATCC 9341 / DSM 348 / NBRC 103217 / DC2201)</name>
    <dbReference type="NCBI Taxonomy" id="378753"/>
    <lineage>
        <taxon>Bacteria</taxon>
        <taxon>Bacillati</taxon>
        <taxon>Actinomycetota</taxon>
        <taxon>Actinomycetes</taxon>
        <taxon>Micrococcales</taxon>
        <taxon>Micrococcaceae</taxon>
        <taxon>Kocuria</taxon>
    </lineage>
</organism>
<reference key="1">
    <citation type="journal article" date="2008" name="J. Bacteriol.">
        <title>Complete genome sequence of the soil actinomycete Kocuria rhizophila.</title>
        <authorList>
            <person name="Takarada H."/>
            <person name="Sekine M."/>
            <person name="Kosugi H."/>
            <person name="Matsuo Y."/>
            <person name="Fujisawa T."/>
            <person name="Omata S."/>
            <person name="Kishi E."/>
            <person name="Shimizu A."/>
            <person name="Tsukatani N."/>
            <person name="Tanikawa S."/>
            <person name="Fujita N."/>
            <person name="Harayama S."/>
        </authorList>
    </citation>
    <scope>NUCLEOTIDE SEQUENCE [LARGE SCALE GENOMIC DNA]</scope>
    <source>
        <strain>ATCC 9341 / DSM 348 / NBRC 103217 / DC2201</strain>
    </source>
</reference>
<feature type="chain" id="PRO_1000097961" description="ATP-dependent Clp protease ATP-binding subunit ClpX">
    <location>
        <begin position="1"/>
        <end position="431"/>
    </location>
</feature>
<feature type="domain" description="ClpX-type ZB" evidence="2">
    <location>
        <begin position="1"/>
        <end position="54"/>
    </location>
</feature>
<feature type="binding site" evidence="2">
    <location>
        <position position="13"/>
    </location>
    <ligand>
        <name>Zn(2+)</name>
        <dbReference type="ChEBI" id="CHEBI:29105"/>
    </ligand>
</feature>
<feature type="binding site" evidence="2">
    <location>
        <position position="16"/>
    </location>
    <ligand>
        <name>Zn(2+)</name>
        <dbReference type="ChEBI" id="CHEBI:29105"/>
    </ligand>
</feature>
<feature type="binding site" evidence="2">
    <location>
        <position position="35"/>
    </location>
    <ligand>
        <name>Zn(2+)</name>
        <dbReference type="ChEBI" id="CHEBI:29105"/>
    </ligand>
</feature>
<feature type="binding site" evidence="2">
    <location>
        <position position="38"/>
    </location>
    <ligand>
        <name>Zn(2+)</name>
        <dbReference type="ChEBI" id="CHEBI:29105"/>
    </ligand>
</feature>
<feature type="binding site" evidence="1">
    <location>
        <begin position="129"/>
        <end position="136"/>
    </location>
    <ligand>
        <name>ATP</name>
        <dbReference type="ChEBI" id="CHEBI:30616"/>
    </ligand>
</feature>
<dbReference type="EMBL" id="AP009152">
    <property type="protein sequence ID" value="BAG29457.1"/>
    <property type="molecule type" value="Genomic_DNA"/>
</dbReference>
<dbReference type="RefSeq" id="WP_012398178.1">
    <property type="nucleotide sequence ID" value="NC_010617.1"/>
</dbReference>
<dbReference type="SMR" id="B2GGB7"/>
<dbReference type="STRING" id="378753.KRH_11100"/>
<dbReference type="KEGG" id="krh:KRH_11100"/>
<dbReference type="eggNOG" id="COG1219">
    <property type="taxonomic scope" value="Bacteria"/>
</dbReference>
<dbReference type="HOGENOM" id="CLU_014218_8_2_11"/>
<dbReference type="OrthoDB" id="9804062at2"/>
<dbReference type="Proteomes" id="UP000008838">
    <property type="component" value="Chromosome"/>
</dbReference>
<dbReference type="GO" id="GO:0009376">
    <property type="term" value="C:HslUV protease complex"/>
    <property type="evidence" value="ECO:0007669"/>
    <property type="project" value="TreeGrafter"/>
</dbReference>
<dbReference type="GO" id="GO:0005524">
    <property type="term" value="F:ATP binding"/>
    <property type="evidence" value="ECO:0007669"/>
    <property type="project" value="UniProtKB-UniRule"/>
</dbReference>
<dbReference type="GO" id="GO:0016887">
    <property type="term" value="F:ATP hydrolysis activity"/>
    <property type="evidence" value="ECO:0007669"/>
    <property type="project" value="InterPro"/>
</dbReference>
<dbReference type="GO" id="GO:0140662">
    <property type="term" value="F:ATP-dependent protein folding chaperone"/>
    <property type="evidence" value="ECO:0007669"/>
    <property type="project" value="InterPro"/>
</dbReference>
<dbReference type="GO" id="GO:0046983">
    <property type="term" value="F:protein dimerization activity"/>
    <property type="evidence" value="ECO:0007669"/>
    <property type="project" value="InterPro"/>
</dbReference>
<dbReference type="GO" id="GO:0051082">
    <property type="term" value="F:unfolded protein binding"/>
    <property type="evidence" value="ECO:0007669"/>
    <property type="project" value="UniProtKB-UniRule"/>
</dbReference>
<dbReference type="GO" id="GO:0008270">
    <property type="term" value="F:zinc ion binding"/>
    <property type="evidence" value="ECO:0007669"/>
    <property type="project" value="InterPro"/>
</dbReference>
<dbReference type="GO" id="GO:0051301">
    <property type="term" value="P:cell division"/>
    <property type="evidence" value="ECO:0007669"/>
    <property type="project" value="TreeGrafter"/>
</dbReference>
<dbReference type="GO" id="GO:0051603">
    <property type="term" value="P:proteolysis involved in protein catabolic process"/>
    <property type="evidence" value="ECO:0007669"/>
    <property type="project" value="TreeGrafter"/>
</dbReference>
<dbReference type="CDD" id="cd19497">
    <property type="entry name" value="RecA-like_ClpX"/>
    <property type="match status" value="1"/>
</dbReference>
<dbReference type="FunFam" id="1.10.8.60:FF:000002">
    <property type="entry name" value="ATP-dependent Clp protease ATP-binding subunit ClpX"/>
    <property type="match status" value="1"/>
</dbReference>
<dbReference type="FunFam" id="3.40.50.300:FF:000005">
    <property type="entry name" value="ATP-dependent Clp protease ATP-binding subunit ClpX"/>
    <property type="match status" value="1"/>
</dbReference>
<dbReference type="Gene3D" id="1.10.8.60">
    <property type="match status" value="1"/>
</dbReference>
<dbReference type="Gene3D" id="6.20.220.10">
    <property type="entry name" value="ClpX chaperone, C4-type zinc finger domain"/>
    <property type="match status" value="1"/>
</dbReference>
<dbReference type="Gene3D" id="3.40.50.300">
    <property type="entry name" value="P-loop containing nucleotide triphosphate hydrolases"/>
    <property type="match status" value="1"/>
</dbReference>
<dbReference type="HAMAP" id="MF_00175">
    <property type="entry name" value="ClpX"/>
    <property type="match status" value="1"/>
</dbReference>
<dbReference type="InterPro" id="IPR003593">
    <property type="entry name" value="AAA+_ATPase"/>
</dbReference>
<dbReference type="InterPro" id="IPR050052">
    <property type="entry name" value="ATP-dep_Clp_protease_ClpX"/>
</dbReference>
<dbReference type="InterPro" id="IPR003959">
    <property type="entry name" value="ATPase_AAA_core"/>
</dbReference>
<dbReference type="InterPro" id="IPR019489">
    <property type="entry name" value="Clp_ATPase_C"/>
</dbReference>
<dbReference type="InterPro" id="IPR004487">
    <property type="entry name" value="Clp_protease_ATP-bd_su_ClpX"/>
</dbReference>
<dbReference type="InterPro" id="IPR046425">
    <property type="entry name" value="ClpX_bact"/>
</dbReference>
<dbReference type="InterPro" id="IPR027417">
    <property type="entry name" value="P-loop_NTPase"/>
</dbReference>
<dbReference type="InterPro" id="IPR010603">
    <property type="entry name" value="Znf_CppX_C4"/>
</dbReference>
<dbReference type="InterPro" id="IPR038366">
    <property type="entry name" value="Znf_CppX_C4_sf"/>
</dbReference>
<dbReference type="NCBIfam" id="TIGR00382">
    <property type="entry name" value="clpX"/>
    <property type="match status" value="1"/>
</dbReference>
<dbReference type="NCBIfam" id="NF003745">
    <property type="entry name" value="PRK05342.1"/>
    <property type="match status" value="1"/>
</dbReference>
<dbReference type="PANTHER" id="PTHR48102:SF7">
    <property type="entry name" value="ATP-DEPENDENT CLP PROTEASE ATP-BINDING SUBUNIT CLPX-LIKE, MITOCHONDRIAL"/>
    <property type="match status" value="1"/>
</dbReference>
<dbReference type="PANTHER" id="PTHR48102">
    <property type="entry name" value="ATP-DEPENDENT CLP PROTEASE ATP-BINDING SUBUNIT CLPX-LIKE, MITOCHONDRIAL-RELATED"/>
    <property type="match status" value="1"/>
</dbReference>
<dbReference type="Pfam" id="PF07724">
    <property type="entry name" value="AAA_2"/>
    <property type="match status" value="1"/>
</dbReference>
<dbReference type="Pfam" id="PF10431">
    <property type="entry name" value="ClpB_D2-small"/>
    <property type="match status" value="1"/>
</dbReference>
<dbReference type="Pfam" id="PF06689">
    <property type="entry name" value="zf-C4_ClpX"/>
    <property type="match status" value="1"/>
</dbReference>
<dbReference type="SMART" id="SM00382">
    <property type="entry name" value="AAA"/>
    <property type="match status" value="1"/>
</dbReference>
<dbReference type="SMART" id="SM01086">
    <property type="entry name" value="ClpB_D2-small"/>
    <property type="match status" value="1"/>
</dbReference>
<dbReference type="SMART" id="SM00994">
    <property type="entry name" value="zf-C4_ClpX"/>
    <property type="match status" value="1"/>
</dbReference>
<dbReference type="SUPFAM" id="SSF57716">
    <property type="entry name" value="Glucocorticoid receptor-like (DNA-binding domain)"/>
    <property type="match status" value="1"/>
</dbReference>
<dbReference type="SUPFAM" id="SSF52540">
    <property type="entry name" value="P-loop containing nucleoside triphosphate hydrolases"/>
    <property type="match status" value="1"/>
</dbReference>
<dbReference type="PROSITE" id="PS51902">
    <property type="entry name" value="CLPX_ZB"/>
    <property type="match status" value="1"/>
</dbReference>
<accession>B2GGB7</accession>
<sequence length="431" mass="47086">MARIGESVDLLKCSFCGKSQKQVRKLIAGPRVYICDECIELCNEIIEEELTEVTEADQTELPRPKQVYDHLQEYVIGQEPAKRSLAVAVYNHYKRIRAGVSGHTLSLAGAEGDEEAIEVAKSNILLVGPTGSGKTYLAQSLAKKLDVPFAVADATSLTEAGYVGEDVENILLKLIQAADFDLKKAEQGIIYIDEIDKISRKSENPSITRDVSGEGVQQALLKILEGTVASVPPQGGRKHPQQEFLHIDTTNVLFIVAGAFAGLEEIVQQRTGKKGIGFGAPIRDTADVDIAGQVQPEDLLKFGLIPEFIGRLPVVATLSKLSVADMVRILTEPRNALVKQYRKLFQLDGVELTFDPQALEAIAELALERGTGARGLRAILEDILMPVMFDLPGREDVAAVLVTEDAVAKLADPEIFTHEMIEAERRRHKSA</sequence>
<gene>
    <name evidence="1" type="primary">clpX</name>
    <name type="ordered locus">KRH_11100</name>
</gene>
<keyword id="KW-0067">ATP-binding</keyword>
<keyword id="KW-0143">Chaperone</keyword>
<keyword id="KW-0479">Metal-binding</keyword>
<keyword id="KW-0547">Nucleotide-binding</keyword>
<keyword id="KW-1185">Reference proteome</keyword>
<keyword id="KW-0862">Zinc</keyword>
<evidence type="ECO:0000255" key="1">
    <source>
        <dbReference type="HAMAP-Rule" id="MF_00175"/>
    </source>
</evidence>
<evidence type="ECO:0000255" key="2">
    <source>
        <dbReference type="PROSITE-ProRule" id="PRU01250"/>
    </source>
</evidence>
<name>CLPX_KOCRD</name>